<evidence type="ECO:0000255" key="1">
    <source>
        <dbReference type="HAMAP-Rule" id="MF_00082"/>
    </source>
</evidence>
<evidence type="ECO:0000305" key="2"/>
<organism>
    <name type="scientific">Escherichia coli (strain UTI89 / UPEC)</name>
    <dbReference type="NCBI Taxonomy" id="364106"/>
    <lineage>
        <taxon>Bacteria</taxon>
        <taxon>Pseudomonadati</taxon>
        <taxon>Pseudomonadota</taxon>
        <taxon>Gammaproteobacteria</taxon>
        <taxon>Enterobacterales</taxon>
        <taxon>Enterobacteriaceae</taxon>
        <taxon>Escherichia</taxon>
    </lineage>
</organism>
<keyword id="KW-0028">Amino-acid biosynthesis</keyword>
<keyword id="KW-0055">Arginine biosynthesis</keyword>
<keyword id="KW-0067">ATP-binding</keyword>
<keyword id="KW-0963">Cytoplasm</keyword>
<keyword id="KW-0418">Kinase</keyword>
<keyword id="KW-0547">Nucleotide-binding</keyword>
<keyword id="KW-0808">Transferase</keyword>
<accession>Q1R3V2</accession>
<name>ARGB_ECOUT</name>
<sequence>MMNPLIIKLGGVLLDSEEALERLFSALVNYRESHQRPLVIVHGGGCVVDELMKGLNLPVKKKNGLRVTPADQIDIITGALAGTANKTLLAWAKKHQIAAVGLFLGDGDSVKVTQLDEELGHVGLAQPGSPKLINSLLENGYLPVVSSIGVTDEGQLMNVNADQAATALAATLGADLILLSDVSGILDGKGQRIAEMTAAKAEQLIEQGIITDGMIVKVNAALDAARTLGRPVDIASWRHAEQLPALFNGMPMGTRILA</sequence>
<gene>
    <name evidence="1" type="primary">argB</name>
    <name type="ordered locus">UTI89_C4550</name>
</gene>
<dbReference type="EC" id="2.7.2.8" evidence="1"/>
<dbReference type="EMBL" id="CP000243">
    <property type="protein sequence ID" value="ABE09962.1"/>
    <property type="status" value="ALT_INIT"/>
    <property type="molecule type" value="Genomic_DNA"/>
</dbReference>
<dbReference type="RefSeq" id="WP_001302318.1">
    <property type="nucleotide sequence ID" value="NZ_CP064825.1"/>
</dbReference>
<dbReference type="SMR" id="Q1R3V2"/>
<dbReference type="GeneID" id="75203211"/>
<dbReference type="KEGG" id="eci:UTI89_C4550"/>
<dbReference type="HOGENOM" id="CLU_053680_1_1_6"/>
<dbReference type="UniPathway" id="UPA00068">
    <property type="reaction ID" value="UER00107"/>
</dbReference>
<dbReference type="Proteomes" id="UP000001952">
    <property type="component" value="Chromosome"/>
</dbReference>
<dbReference type="GO" id="GO:0005737">
    <property type="term" value="C:cytoplasm"/>
    <property type="evidence" value="ECO:0007669"/>
    <property type="project" value="UniProtKB-SubCell"/>
</dbReference>
<dbReference type="GO" id="GO:0003991">
    <property type="term" value="F:acetylglutamate kinase activity"/>
    <property type="evidence" value="ECO:0007669"/>
    <property type="project" value="UniProtKB-UniRule"/>
</dbReference>
<dbReference type="GO" id="GO:0005524">
    <property type="term" value="F:ATP binding"/>
    <property type="evidence" value="ECO:0007669"/>
    <property type="project" value="UniProtKB-UniRule"/>
</dbReference>
<dbReference type="GO" id="GO:0042450">
    <property type="term" value="P:arginine biosynthetic process via ornithine"/>
    <property type="evidence" value="ECO:0007669"/>
    <property type="project" value="UniProtKB-UniRule"/>
</dbReference>
<dbReference type="GO" id="GO:0006526">
    <property type="term" value="P:L-arginine biosynthetic process"/>
    <property type="evidence" value="ECO:0007669"/>
    <property type="project" value="UniProtKB-UniPathway"/>
</dbReference>
<dbReference type="CDD" id="cd04249">
    <property type="entry name" value="AAK_NAGK-NC"/>
    <property type="match status" value="1"/>
</dbReference>
<dbReference type="FunFam" id="3.40.1160.10:FF:000008">
    <property type="entry name" value="Acetylglutamate kinase"/>
    <property type="match status" value="1"/>
</dbReference>
<dbReference type="Gene3D" id="3.40.1160.10">
    <property type="entry name" value="Acetylglutamate kinase-like"/>
    <property type="match status" value="1"/>
</dbReference>
<dbReference type="HAMAP" id="MF_00082">
    <property type="entry name" value="ArgB"/>
    <property type="match status" value="1"/>
</dbReference>
<dbReference type="InterPro" id="IPR036393">
    <property type="entry name" value="AceGlu_kinase-like_sf"/>
</dbReference>
<dbReference type="InterPro" id="IPR004662">
    <property type="entry name" value="AcgluKinase_fam"/>
</dbReference>
<dbReference type="InterPro" id="IPR037528">
    <property type="entry name" value="ArgB"/>
</dbReference>
<dbReference type="InterPro" id="IPR001048">
    <property type="entry name" value="Asp/Glu/Uridylate_kinase"/>
</dbReference>
<dbReference type="InterPro" id="IPR041731">
    <property type="entry name" value="NAGK-NC"/>
</dbReference>
<dbReference type="NCBIfam" id="TIGR00761">
    <property type="entry name" value="argB"/>
    <property type="match status" value="1"/>
</dbReference>
<dbReference type="PANTHER" id="PTHR23342">
    <property type="entry name" value="N-ACETYLGLUTAMATE SYNTHASE"/>
    <property type="match status" value="1"/>
</dbReference>
<dbReference type="PANTHER" id="PTHR23342:SF0">
    <property type="entry name" value="N-ACETYLGLUTAMATE SYNTHASE, MITOCHONDRIAL"/>
    <property type="match status" value="1"/>
</dbReference>
<dbReference type="Pfam" id="PF00696">
    <property type="entry name" value="AA_kinase"/>
    <property type="match status" value="1"/>
</dbReference>
<dbReference type="PIRSF" id="PIRSF000728">
    <property type="entry name" value="NAGK"/>
    <property type="match status" value="1"/>
</dbReference>
<dbReference type="SUPFAM" id="SSF53633">
    <property type="entry name" value="Carbamate kinase-like"/>
    <property type="match status" value="1"/>
</dbReference>
<proteinExistence type="inferred from homology"/>
<reference key="1">
    <citation type="journal article" date="2006" name="Proc. Natl. Acad. Sci. U.S.A.">
        <title>Identification of genes subject to positive selection in uropathogenic strains of Escherichia coli: a comparative genomics approach.</title>
        <authorList>
            <person name="Chen S.L."/>
            <person name="Hung C.-S."/>
            <person name="Xu J."/>
            <person name="Reigstad C.S."/>
            <person name="Magrini V."/>
            <person name="Sabo A."/>
            <person name="Blasiar D."/>
            <person name="Bieri T."/>
            <person name="Meyer R.R."/>
            <person name="Ozersky P."/>
            <person name="Armstrong J.R."/>
            <person name="Fulton R.S."/>
            <person name="Latreille J.P."/>
            <person name="Spieth J."/>
            <person name="Hooton T.M."/>
            <person name="Mardis E.R."/>
            <person name="Hultgren S.J."/>
            <person name="Gordon J.I."/>
        </authorList>
    </citation>
    <scope>NUCLEOTIDE SEQUENCE [LARGE SCALE GENOMIC DNA]</scope>
    <source>
        <strain>UTI89 / UPEC</strain>
    </source>
</reference>
<feature type="chain" id="PRO_0000264706" description="Acetylglutamate kinase">
    <location>
        <begin position="1"/>
        <end position="258"/>
    </location>
</feature>
<feature type="binding site" evidence="1">
    <location>
        <begin position="44"/>
        <end position="45"/>
    </location>
    <ligand>
        <name>substrate</name>
    </ligand>
</feature>
<feature type="binding site" evidence="1">
    <location>
        <position position="66"/>
    </location>
    <ligand>
        <name>substrate</name>
    </ligand>
</feature>
<feature type="binding site" evidence="1">
    <location>
        <position position="158"/>
    </location>
    <ligand>
        <name>substrate</name>
    </ligand>
</feature>
<feature type="binding site" evidence="1">
    <location>
        <begin position="181"/>
        <end position="186"/>
    </location>
    <ligand>
        <name>ATP</name>
        <dbReference type="ChEBI" id="CHEBI:30616"/>
    </ligand>
</feature>
<feature type="binding site" evidence="1">
    <location>
        <begin position="209"/>
        <end position="211"/>
    </location>
    <ligand>
        <name>ATP</name>
        <dbReference type="ChEBI" id="CHEBI:30616"/>
    </ligand>
</feature>
<feature type="site" description="Transition state stabilizer" evidence="1">
    <location>
        <position position="8"/>
    </location>
</feature>
<feature type="site" description="Transition state stabilizer" evidence="1">
    <location>
        <position position="217"/>
    </location>
</feature>
<protein>
    <recommendedName>
        <fullName evidence="1">Acetylglutamate kinase</fullName>
        <ecNumber evidence="1">2.7.2.8</ecNumber>
    </recommendedName>
    <alternativeName>
        <fullName evidence="1">N-acetyl-L-glutamate 5-phosphotransferase</fullName>
    </alternativeName>
    <alternativeName>
        <fullName evidence="1">NAG kinase</fullName>
        <shortName evidence="1">NAGK</shortName>
    </alternativeName>
</protein>
<comment type="function">
    <text evidence="1">Catalyzes the ATP-dependent phosphorylation of N-acetyl-L-glutamate.</text>
</comment>
<comment type="catalytic activity">
    <reaction evidence="1">
        <text>N-acetyl-L-glutamate + ATP = N-acetyl-L-glutamyl 5-phosphate + ADP</text>
        <dbReference type="Rhea" id="RHEA:14629"/>
        <dbReference type="ChEBI" id="CHEBI:30616"/>
        <dbReference type="ChEBI" id="CHEBI:44337"/>
        <dbReference type="ChEBI" id="CHEBI:57936"/>
        <dbReference type="ChEBI" id="CHEBI:456216"/>
        <dbReference type="EC" id="2.7.2.8"/>
    </reaction>
</comment>
<comment type="pathway">
    <text evidence="1">Amino-acid biosynthesis; L-arginine biosynthesis; N(2)-acetyl-L-ornithine from L-glutamate: step 2/4.</text>
</comment>
<comment type="subunit">
    <text evidence="1">Homodimer.</text>
</comment>
<comment type="subcellular location">
    <subcellularLocation>
        <location evidence="1">Cytoplasm</location>
    </subcellularLocation>
</comment>
<comment type="similarity">
    <text evidence="1">Belongs to the acetylglutamate kinase family. ArgB subfamily.</text>
</comment>
<comment type="sequence caution" evidence="2">
    <conflict type="erroneous initiation">
        <sequence resource="EMBL-CDS" id="ABE09962"/>
    </conflict>
</comment>